<dbReference type="EC" id="3.4.19.12"/>
<dbReference type="EMBL" id="AC091609">
    <property type="status" value="NOT_ANNOTATED_CDS"/>
    <property type="molecule type" value="Genomic_DNA"/>
</dbReference>
<dbReference type="EMBL" id="AK000321">
    <property type="protein sequence ID" value="BAA91084.1"/>
    <property type="status" value="ALT_INIT"/>
    <property type="molecule type" value="mRNA"/>
</dbReference>
<dbReference type="EMBL" id="AK127075">
    <property type="protein sequence ID" value="BAC86814.1"/>
    <property type="molecule type" value="mRNA"/>
</dbReference>
<dbReference type="EMBL" id="AB028980">
    <property type="protein sequence ID" value="BAA83009.1"/>
    <property type="molecule type" value="mRNA"/>
</dbReference>
<dbReference type="EMBL" id="BC029660">
    <property type="protein sequence ID" value="AAH29660.1"/>
    <property type="status" value="ALT_INIT"/>
    <property type="molecule type" value="mRNA"/>
</dbReference>
<dbReference type="CCDS" id="CCDS44154.2"/>
<dbReference type="RefSeq" id="NP_056121.2">
    <property type="nucleotide sequence ID" value="NM_015306.3"/>
</dbReference>
<dbReference type="SMR" id="Q9UPU5"/>
<dbReference type="BioGRID" id="116939">
    <property type="interactions" value="114"/>
</dbReference>
<dbReference type="FunCoup" id="Q9UPU5">
    <property type="interactions" value="4699"/>
</dbReference>
<dbReference type="IntAct" id="Q9UPU5">
    <property type="interactions" value="61"/>
</dbReference>
<dbReference type="MINT" id="Q9UPU5"/>
<dbReference type="STRING" id="9606.ENSP00000294383"/>
<dbReference type="BindingDB" id="Q9UPU5"/>
<dbReference type="ChEMBL" id="CHEMBL5291599"/>
<dbReference type="MEROPS" id="C19.047"/>
<dbReference type="GlyGen" id="Q9UPU5">
    <property type="glycosylation" value="6 sites, 1 N-linked glycan (1 site), 1 O-linked glycan (3 sites)"/>
</dbReference>
<dbReference type="iPTMnet" id="Q9UPU5"/>
<dbReference type="PhosphoSitePlus" id="Q9UPU5"/>
<dbReference type="SwissPalm" id="Q9UPU5"/>
<dbReference type="BioMuta" id="USP24"/>
<dbReference type="DMDM" id="212276491"/>
<dbReference type="jPOST" id="Q9UPU5"/>
<dbReference type="MassIVE" id="Q9UPU5"/>
<dbReference type="PaxDb" id="9606-ENSP00000294383"/>
<dbReference type="PeptideAtlas" id="Q9UPU5"/>
<dbReference type="ProteomicsDB" id="85446"/>
<dbReference type="Pumba" id="Q9UPU5"/>
<dbReference type="Antibodypedia" id="33232">
    <property type="antibodies" value="182 antibodies from 26 providers"/>
</dbReference>
<dbReference type="DNASU" id="23358"/>
<dbReference type="Ensembl" id="ENST00000294383.7">
    <property type="protein sequence ID" value="ENSP00000294383.5"/>
    <property type="gene ID" value="ENSG00000162402.15"/>
</dbReference>
<dbReference type="GeneID" id="23358"/>
<dbReference type="KEGG" id="hsa:23358"/>
<dbReference type="MANE-Select" id="ENST00000294383.7">
    <property type="protein sequence ID" value="ENSP00000294383.5"/>
    <property type="RefSeq nucleotide sequence ID" value="NM_015306.3"/>
    <property type="RefSeq protein sequence ID" value="NP_056121.2"/>
</dbReference>
<dbReference type="UCSC" id="uc021onw.2">
    <property type="organism name" value="human"/>
</dbReference>
<dbReference type="AGR" id="HGNC:12623"/>
<dbReference type="CTD" id="23358"/>
<dbReference type="DisGeNET" id="23358"/>
<dbReference type="GeneCards" id="USP24"/>
<dbReference type="HGNC" id="HGNC:12623">
    <property type="gene designation" value="USP24"/>
</dbReference>
<dbReference type="HPA" id="ENSG00000162402">
    <property type="expression patterns" value="Low tissue specificity"/>
</dbReference>
<dbReference type="MIM" id="610569">
    <property type="type" value="gene"/>
</dbReference>
<dbReference type="neXtProt" id="NX_Q9UPU5"/>
<dbReference type="OpenTargets" id="ENSG00000162402"/>
<dbReference type="PharmGKB" id="PA37248"/>
<dbReference type="VEuPathDB" id="HostDB:ENSG00000162402"/>
<dbReference type="eggNOG" id="KOG1866">
    <property type="taxonomic scope" value="Eukaryota"/>
</dbReference>
<dbReference type="GeneTree" id="ENSGT00940000159474"/>
<dbReference type="HOGENOM" id="CLU_000331_1_0_1"/>
<dbReference type="InParanoid" id="Q9UPU5"/>
<dbReference type="OMA" id="LCCPVDN"/>
<dbReference type="OrthoDB" id="289038at2759"/>
<dbReference type="PAN-GO" id="Q9UPU5">
    <property type="GO annotations" value="5 GO annotations based on evolutionary models"/>
</dbReference>
<dbReference type="PhylomeDB" id="Q9UPU5"/>
<dbReference type="TreeFam" id="TF323966"/>
<dbReference type="PathwayCommons" id="Q9UPU5"/>
<dbReference type="Reactome" id="R-HSA-5689880">
    <property type="pathway name" value="Ub-specific processing proteases"/>
</dbReference>
<dbReference type="SignaLink" id="Q9UPU5"/>
<dbReference type="SIGNOR" id="Q9UPU5"/>
<dbReference type="BioGRID-ORCS" id="23358">
    <property type="hits" value="21 hits in 1195 CRISPR screens"/>
</dbReference>
<dbReference type="ChiTaRS" id="USP24">
    <property type="organism name" value="human"/>
</dbReference>
<dbReference type="GeneWiki" id="USP24"/>
<dbReference type="GenomeRNAi" id="23358"/>
<dbReference type="Pharos" id="Q9UPU5">
    <property type="development level" value="Tbio"/>
</dbReference>
<dbReference type="PRO" id="PR:Q9UPU5"/>
<dbReference type="Proteomes" id="UP000005640">
    <property type="component" value="Chromosome 1"/>
</dbReference>
<dbReference type="RNAct" id="Q9UPU5">
    <property type="molecule type" value="protein"/>
</dbReference>
<dbReference type="Bgee" id="ENSG00000162402">
    <property type="expression patterns" value="Expressed in sural nerve and 203 other cell types or tissues"/>
</dbReference>
<dbReference type="ExpressionAtlas" id="Q9UPU5">
    <property type="expression patterns" value="baseline and differential"/>
</dbReference>
<dbReference type="GO" id="GO:0005829">
    <property type="term" value="C:cytosol"/>
    <property type="evidence" value="ECO:0000318"/>
    <property type="project" value="GO_Central"/>
</dbReference>
<dbReference type="GO" id="GO:0005654">
    <property type="term" value="C:nucleoplasm"/>
    <property type="evidence" value="ECO:0000304"/>
    <property type="project" value="Reactome"/>
</dbReference>
<dbReference type="GO" id="GO:0005634">
    <property type="term" value="C:nucleus"/>
    <property type="evidence" value="ECO:0000318"/>
    <property type="project" value="GO_Central"/>
</dbReference>
<dbReference type="GO" id="GO:0004843">
    <property type="term" value="F:cysteine-type deubiquitinase activity"/>
    <property type="evidence" value="ECO:0000318"/>
    <property type="project" value="GO_Central"/>
</dbReference>
<dbReference type="GO" id="GO:0016579">
    <property type="term" value="P:protein deubiquitination"/>
    <property type="evidence" value="ECO:0000304"/>
    <property type="project" value="Reactome"/>
</dbReference>
<dbReference type="GO" id="GO:0006508">
    <property type="term" value="P:proteolysis"/>
    <property type="evidence" value="ECO:0007669"/>
    <property type="project" value="UniProtKB-KW"/>
</dbReference>
<dbReference type="GO" id="GO:0031647">
    <property type="term" value="P:regulation of protein stability"/>
    <property type="evidence" value="ECO:0000318"/>
    <property type="project" value="GO_Central"/>
</dbReference>
<dbReference type="CDD" id="cd02659">
    <property type="entry name" value="peptidase_C19C"/>
    <property type="match status" value="1"/>
</dbReference>
<dbReference type="CDD" id="cd14286">
    <property type="entry name" value="UBA_UBP24"/>
    <property type="match status" value="1"/>
</dbReference>
<dbReference type="CDD" id="cd17065">
    <property type="entry name" value="Ubl_UBP24"/>
    <property type="match status" value="1"/>
</dbReference>
<dbReference type="FunFam" id="1.10.8.10:FF:000075">
    <property type="entry name" value="Ubiquitin carboxyl-terminal hydrolase 24"/>
    <property type="match status" value="1"/>
</dbReference>
<dbReference type="FunFam" id="3.90.70.10:FF:000022">
    <property type="entry name" value="Ubiquitin carboxyl-terminal hydrolase 24"/>
    <property type="match status" value="1"/>
</dbReference>
<dbReference type="Gene3D" id="3.90.70.10">
    <property type="entry name" value="Cysteine proteinases"/>
    <property type="match status" value="1"/>
</dbReference>
<dbReference type="Gene3D" id="1.10.8.10">
    <property type="entry name" value="DNA helicase RuvA subunit, C-terminal domain"/>
    <property type="match status" value="1"/>
</dbReference>
<dbReference type="InterPro" id="IPR016024">
    <property type="entry name" value="ARM-type_fold"/>
</dbReference>
<dbReference type="InterPro" id="IPR056850">
    <property type="entry name" value="ARM_UBP34_24_USP9X_Y"/>
</dbReference>
<dbReference type="InterPro" id="IPR038765">
    <property type="entry name" value="Papain-like_cys_pep_sf"/>
</dbReference>
<dbReference type="InterPro" id="IPR050164">
    <property type="entry name" value="Peptidase_C19"/>
</dbReference>
<dbReference type="InterPro" id="IPR001394">
    <property type="entry name" value="Peptidase_C19_UCH"/>
</dbReference>
<dbReference type="InterPro" id="IPR015940">
    <property type="entry name" value="UBA"/>
</dbReference>
<dbReference type="InterPro" id="IPR009060">
    <property type="entry name" value="UBA-like_sf"/>
</dbReference>
<dbReference type="InterPro" id="IPR029071">
    <property type="entry name" value="Ubiquitin-like_domsf"/>
</dbReference>
<dbReference type="InterPro" id="IPR055176">
    <property type="entry name" value="UBP24/USP9X/USP9Y_UBL"/>
</dbReference>
<dbReference type="InterPro" id="IPR047061">
    <property type="entry name" value="UBP24_Ubl"/>
</dbReference>
<dbReference type="InterPro" id="IPR033382">
    <property type="entry name" value="USP24_UBA"/>
</dbReference>
<dbReference type="InterPro" id="IPR018200">
    <property type="entry name" value="USP_CS"/>
</dbReference>
<dbReference type="InterPro" id="IPR028889">
    <property type="entry name" value="USP_dom"/>
</dbReference>
<dbReference type="PANTHER" id="PTHR24006">
    <property type="entry name" value="UBIQUITIN CARBOXYL-TERMINAL HYDROLASE"/>
    <property type="match status" value="1"/>
</dbReference>
<dbReference type="PANTHER" id="PTHR24006:SF729">
    <property type="entry name" value="UBIQUITIN CARBOXYL-TERMINAL HYDROLASE 24"/>
    <property type="match status" value="1"/>
</dbReference>
<dbReference type="Pfam" id="PF25010">
    <property type="entry name" value="ARM_UBP24_USP9X-Y"/>
    <property type="match status" value="1"/>
</dbReference>
<dbReference type="Pfam" id="PF00443">
    <property type="entry name" value="UCH"/>
    <property type="match status" value="1"/>
</dbReference>
<dbReference type="Pfam" id="PF22900">
    <property type="entry name" value="UCH_UBL1"/>
    <property type="match status" value="1"/>
</dbReference>
<dbReference type="SUPFAM" id="SSF48371">
    <property type="entry name" value="ARM repeat"/>
    <property type="match status" value="1"/>
</dbReference>
<dbReference type="SUPFAM" id="SSF54001">
    <property type="entry name" value="Cysteine proteinases"/>
    <property type="match status" value="1"/>
</dbReference>
<dbReference type="SUPFAM" id="SSF46934">
    <property type="entry name" value="UBA-like"/>
    <property type="match status" value="1"/>
</dbReference>
<dbReference type="SUPFAM" id="SSF54236">
    <property type="entry name" value="Ubiquitin-like"/>
    <property type="match status" value="1"/>
</dbReference>
<dbReference type="PROSITE" id="PS50030">
    <property type="entry name" value="UBA"/>
    <property type="match status" value="1"/>
</dbReference>
<dbReference type="PROSITE" id="PS00972">
    <property type="entry name" value="USP_1"/>
    <property type="match status" value="1"/>
</dbReference>
<dbReference type="PROSITE" id="PS00973">
    <property type="entry name" value="USP_2"/>
    <property type="match status" value="1"/>
</dbReference>
<dbReference type="PROSITE" id="PS50235">
    <property type="entry name" value="USP_3"/>
    <property type="match status" value="1"/>
</dbReference>
<protein>
    <recommendedName>
        <fullName>Ubiquitin carboxyl-terminal hydrolase 24</fullName>
        <ecNumber>3.4.19.12</ecNumber>
    </recommendedName>
    <alternativeName>
        <fullName>Deubiquitinating enzyme 24</fullName>
    </alternativeName>
    <alternativeName>
        <fullName>Ubiquitin thioesterase 24</fullName>
    </alternativeName>
    <alternativeName>
        <fullName>Ubiquitin-specific-processing protease 24</fullName>
    </alternativeName>
</protein>
<organism>
    <name type="scientific">Homo sapiens</name>
    <name type="common">Human</name>
    <dbReference type="NCBI Taxonomy" id="9606"/>
    <lineage>
        <taxon>Eukaryota</taxon>
        <taxon>Metazoa</taxon>
        <taxon>Chordata</taxon>
        <taxon>Craniata</taxon>
        <taxon>Vertebrata</taxon>
        <taxon>Euteleostomi</taxon>
        <taxon>Mammalia</taxon>
        <taxon>Eutheria</taxon>
        <taxon>Euarchontoglires</taxon>
        <taxon>Primates</taxon>
        <taxon>Haplorrhini</taxon>
        <taxon>Catarrhini</taxon>
        <taxon>Hominidae</taxon>
        <taxon>Homo</taxon>
    </lineage>
</organism>
<comment type="function">
    <text evidence="8 9">Ubiquitin-specific protease that regulates cell survival in various contexts through modulating the protein stability of some of its substrates including DDB2, MCL1 or TP53. Plays a positive role on ferritinophagy where ferritin is degraded in lysosomes and releases free iron.</text>
</comment>
<comment type="catalytic activity">
    <reaction>
        <text>Thiol-dependent hydrolysis of ester, thioester, amide, peptide and isopeptide bonds formed by the C-terminal Gly of ubiquitin (a 76-residue protein attached to proteins as an intracellular targeting signal).</text>
        <dbReference type="EC" id="3.4.19.12"/>
    </reaction>
</comment>
<comment type="subunit">
    <text evidence="9">(Microbial infection) Interacts with human cytomegalovirus protein UL38.</text>
</comment>
<comment type="interaction">
    <interactant intactId="EBI-1642365">
        <id>Q9UPU5</id>
    </interactant>
    <interactant intactId="EBI-466029">
        <id>P42858</id>
        <label>HTT</label>
    </interactant>
    <organismsDiffer>false</organismsDiffer>
    <experiments>21</experiments>
</comment>
<comment type="similarity">
    <text evidence="10">Belongs to the peptidase C19 family.</text>
</comment>
<comment type="sequence caution" evidence="10">
    <conflict type="erroneous initiation">
        <sequence resource="EMBL-CDS" id="AAH29660"/>
    </conflict>
</comment>
<comment type="sequence caution" evidence="10">
    <conflict type="erroneous initiation">
        <sequence resource="EMBL-CDS" id="BAA91084"/>
    </conflict>
</comment>
<accession>Q9UPU5</accession>
<accession>Q6ZSY2</accession>
<accession>Q8N2Y4</accession>
<accession>Q9NXD1</accession>
<name>UBP24_HUMAN</name>
<gene>
    <name type="primary">USP24</name>
    <name type="synonym">KIAA1057</name>
</gene>
<keyword id="KW-0945">Host-virus interaction</keyword>
<keyword id="KW-0378">Hydrolase</keyword>
<keyword id="KW-0597">Phosphoprotein</keyword>
<keyword id="KW-0645">Protease</keyword>
<keyword id="KW-1267">Proteomics identification</keyword>
<keyword id="KW-1185">Reference proteome</keyword>
<keyword id="KW-0788">Thiol protease</keyword>
<keyword id="KW-0833">Ubl conjugation pathway</keyword>
<feature type="chain" id="PRO_0000080652" description="Ubiquitin carboxyl-terminal hydrolase 24">
    <location>
        <begin position="1"/>
        <end position="2620"/>
    </location>
</feature>
<feature type="domain" description="UBA" evidence="2">
    <location>
        <begin position="3"/>
        <end position="44"/>
    </location>
</feature>
<feature type="domain" description="USP">
    <location>
        <begin position="1689"/>
        <end position="2042"/>
    </location>
</feature>
<feature type="region of interest" description="Disordered" evidence="5">
    <location>
        <begin position="45"/>
        <end position="102"/>
    </location>
</feature>
<feature type="region of interest" description="Disordered" evidence="5">
    <location>
        <begin position="1034"/>
        <end position="1054"/>
    </location>
</feature>
<feature type="region of interest" description="Disordered" evidence="5">
    <location>
        <begin position="1129"/>
        <end position="1151"/>
    </location>
</feature>
<feature type="region of interest" description="Disordered" evidence="5">
    <location>
        <begin position="1921"/>
        <end position="1945"/>
    </location>
</feature>
<feature type="region of interest" description="Disordered" evidence="5">
    <location>
        <begin position="2063"/>
        <end position="2090"/>
    </location>
</feature>
<feature type="region of interest" description="Disordered" evidence="5">
    <location>
        <begin position="2575"/>
        <end position="2620"/>
    </location>
</feature>
<feature type="compositionally biased region" description="Gly residues" evidence="5">
    <location>
        <begin position="58"/>
        <end position="95"/>
    </location>
</feature>
<feature type="compositionally biased region" description="Low complexity" evidence="5">
    <location>
        <begin position="1131"/>
        <end position="1151"/>
    </location>
</feature>
<feature type="compositionally biased region" description="Low complexity" evidence="5">
    <location>
        <begin position="2069"/>
        <end position="2082"/>
    </location>
</feature>
<feature type="compositionally biased region" description="Low complexity" evidence="5">
    <location>
        <begin position="2579"/>
        <end position="2592"/>
    </location>
</feature>
<feature type="compositionally biased region" description="Basic and acidic residues" evidence="5">
    <location>
        <begin position="2611"/>
        <end position="2620"/>
    </location>
</feature>
<feature type="active site" description="Nucleophile" evidence="3 4">
    <location>
        <position position="1698"/>
    </location>
</feature>
<feature type="active site" description="Proton acceptor" evidence="3 4">
    <location>
        <position position="1970"/>
    </location>
</feature>
<feature type="modified residue" description="Phosphoserine" evidence="13 14">
    <location>
        <position position="63"/>
    </location>
</feature>
<feature type="modified residue" description="Phosphoserine" evidence="21">
    <location>
        <position position="88"/>
    </location>
</feature>
<feature type="modified residue" description="Phosphotyrosine" evidence="1">
    <location>
        <position position="942"/>
    </location>
</feature>
<feature type="modified residue" description="Phosphoserine" evidence="14 20">
    <location>
        <position position="1141"/>
    </location>
</feature>
<feature type="modified residue" description="Phosphoserine" evidence="20">
    <location>
        <position position="1285"/>
    </location>
</feature>
<feature type="modified residue" description="Phosphoserine" evidence="1">
    <location>
        <position position="1943"/>
    </location>
</feature>
<feature type="modified residue" description="Phosphoserine" evidence="11 12 14 15 16 18 19 20 21">
    <location>
        <position position="2047"/>
    </location>
</feature>
<feature type="modified residue" description="Phosphoserine" evidence="1">
    <location>
        <position position="2077"/>
    </location>
</feature>
<feature type="modified residue" description="Phosphoserine" evidence="17 20">
    <location>
        <position position="2561"/>
    </location>
</feature>
<feature type="modified residue" description="Phosphothreonine" evidence="14 18 19">
    <location>
        <position position="2565"/>
    </location>
</feature>
<feature type="modified residue" description="Phosphoserine" evidence="14 20">
    <location>
        <position position="2604"/>
    </location>
</feature>
<feature type="sequence variant" id="VAR_047154" description="In dbSNP:rs1165222.">
    <original>T</original>
    <variation>I</variation>
    <location>
        <position position="226"/>
    </location>
</feature>
<feature type="sequence variant" id="VAR_047155" description="In dbSNP:rs2274540.">
    <original>G</original>
    <variation>S</variation>
    <location>
        <position position="1940"/>
    </location>
</feature>
<feature type="sequence variant" id="VAR_047156" description="In dbSNP:rs12753590.">
    <original>Y</original>
    <variation>S</variation>
    <location>
        <position position="2134"/>
    </location>
</feature>
<feature type="sequence variant" id="VAR_047157" description="In dbSNP:rs487230." evidence="6 7">
    <original>V</original>
    <variation>A</variation>
    <location>
        <position position="2468"/>
    </location>
</feature>
<feature type="sequence conflict" description="In Ref. 2; BAC86814." evidence="10" ref="2">
    <original>N</original>
    <variation>S</variation>
    <location>
        <position position="840"/>
    </location>
</feature>
<feature type="sequence conflict" description="In Ref. 2; BAC86814." evidence="10" ref="2">
    <original>I</original>
    <variation>L</variation>
    <location>
        <position position="990"/>
    </location>
</feature>
<feature type="sequence conflict" description="In Ref. 2; BAC86814." evidence="10" ref="2">
    <original>P</original>
    <variation>S</variation>
    <location>
        <position position="1253"/>
    </location>
</feature>
<feature type="sequence conflict" description="In Ref. 2; BAC86814." evidence="10" ref="2">
    <original>E</original>
    <variation>G</variation>
    <location>
        <position position="1776"/>
    </location>
</feature>
<feature type="sequence conflict" description="In Ref. 2; BAA91084." evidence="10" ref="2">
    <original>K</original>
    <variation>R</variation>
    <location>
        <position position="2576"/>
    </location>
</feature>
<evidence type="ECO:0000250" key="1">
    <source>
        <dbReference type="UniProtKB" id="B1AY13"/>
    </source>
</evidence>
<evidence type="ECO:0000255" key="2">
    <source>
        <dbReference type="PROSITE-ProRule" id="PRU00212"/>
    </source>
</evidence>
<evidence type="ECO:0000255" key="3">
    <source>
        <dbReference type="PROSITE-ProRule" id="PRU10092"/>
    </source>
</evidence>
<evidence type="ECO:0000255" key="4">
    <source>
        <dbReference type="PROSITE-ProRule" id="PRU10093"/>
    </source>
</evidence>
<evidence type="ECO:0000256" key="5">
    <source>
        <dbReference type="SAM" id="MobiDB-lite"/>
    </source>
</evidence>
<evidence type="ECO:0000269" key="6">
    <source>
    </source>
</evidence>
<evidence type="ECO:0000269" key="7">
    <source>
    </source>
</evidence>
<evidence type="ECO:0000269" key="8">
    <source>
    </source>
</evidence>
<evidence type="ECO:0000269" key="9">
    <source>
    </source>
</evidence>
<evidence type="ECO:0000305" key="10"/>
<evidence type="ECO:0007744" key="11">
    <source>
    </source>
</evidence>
<evidence type="ECO:0007744" key="12">
    <source>
    </source>
</evidence>
<evidence type="ECO:0007744" key="13">
    <source>
    </source>
</evidence>
<evidence type="ECO:0007744" key="14">
    <source>
    </source>
</evidence>
<evidence type="ECO:0007744" key="15">
    <source>
    </source>
</evidence>
<evidence type="ECO:0007744" key="16">
    <source>
    </source>
</evidence>
<evidence type="ECO:0007744" key="17">
    <source>
    </source>
</evidence>
<evidence type="ECO:0007744" key="18">
    <source>
    </source>
</evidence>
<evidence type="ECO:0007744" key="19">
    <source>
    </source>
</evidence>
<evidence type="ECO:0007744" key="20">
    <source>
    </source>
</evidence>
<evidence type="ECO:0007744" key="21">
    <source>
    </source>
</evidence>
<sequence>MESEEEQHMTTLLCMGFSDPATIRKALRLAKNDINEAVALLTNERPGLDYGGYEPMDSGGGPSPGPGGGPRGDGGGDGGGGGPSRGGSTGGGGGFDPPPAYHEVVDAEKNDENGNCSGEGIEFPTTNLYELESRVLTDHWSIPYKREESLGKCLLASTYLARLGLSESDENCRRFMDRCMPEAFKKLLTSSAVHKWGTEIHEGIYNMLMLLIELVAERIKQDPIPTGLLGVLTMAFNPDNEYHFKNRMKVSQRNWAEVFGEGNMFAVSPVSTFQKEPHGWVVDLVNKFGELGGFAAIQAKLHSEDIELGAVSALIQPLGVCAEYLNSSVVQPMLDPVILTTIQDVRSVEEKDLKDKRLVSIPELLSAVKLLCMRFQPDLVTIVDDLRLDILLRMLKSPHFSAKMNSLKEVTKLIEDSTLSKSVKNAIDTDRLLDWLVENSVLSIALEGNIDQAQYCDRIKGIIELLGSKLSLDELTKIWKIQSGQSSTVIENIHTIIAAAAVKFNSDQLNHLFVLIQKSWETESDRVRQKLLSLIGRIGREARFETTSGKVLDVLWELAHLPTLPSSLIQQALEEHLTILSDAYAVKEAIKRSYIIKCIEDIKRPGEWSGLEKNKKDGFKSSQLNNPQFVWVVPALRQLHEITRSFIKQTYQKQDKSIIQDLKKNFEIVKLVTGSLIACHRLAAAVAGPGGLSGSTLVDGRYTYREYLEAHLKFLAFFLQEATLYLGWNRAKEIWECLVTGQDVCELDREMCFEWFTKGQHDLESDVQQQLFKEKILKLESYEITMNGFNLFKTFFENVNLCDHRLKRQGAQLYVEKLELIGMDFIWKIAMESPDEEIANEAIQLIINYSYINLNPRLKKDSVSLHKKFIADCYTRLEAASSALGGPTLTHAVTRATKMLTATAMPTVATSVQSPYRSTKLVIIERLLLLAERYVITIEDFYSVPRTILPHGASFHGHLLTLNVTYESTKDTFTVEAHSNETIGSVRWKIAKQLCSPVDNIQIFTNDSLLTVNKDQKLLHQLGFSDEQILTVKTSGSGTPSGSSADSSTSSSSSSSGVFSSSYAMEQEKSLPGVVMALVCNVFDMLYQLANLEEPRITLRVRKLLLLIPTDPAIQEALDQLDSLGRKKTLLSESSSQSSKSPSLSSKQQHQPSASSILESLFRSFAPGMSTFRVLYNLEVLSSKLMPTADDDMARSCAKSFCENFLKAGGLSLVVNVMQRDSIPSEVDYETRQGVYSICLQLARFLLVGQTMPTLLDEDLTKDGIEALSSRPFRNVSRQTSRQMSLCGTPEKSSYRQLSVSDRSSIRVEEIIPAARVAIQTMEVSDFTSTVACFMRLSWAAAAGRLDLVGSSQPIKESNSLCPAGIRNRLSSSGSNCSSGSEGEPVALHAGICVRQQSVSTKDSLIAGEALSLLVTCLQLRSQQLASFYNLPCVADFIIDILLGSPSAEIRRVACDQLYTLSQTDTSAHPDVQKPNQFLLGVILTAQLPLWSPTSIMRGVNQRLLSQCMEYFDLRCQLLDDLTTSEMEQLRISPATMLEDEITWLDNFEPNRTAECETSEADNILLAGHLRLIKTLLSLCGAEKEMLGSSLIKPLLDDFLFRASRIILNSHSPAGSAAISQQDFHPKCSTANSRLAAYEVLVMLADSSPSNLQIIIKELLSMHHQPDPALTKEFDYLPPVDSRSSSGFVGLRNGGATCYMNAVFQQLYMQPGLPESLLSVDDDTDNPDDSVFYQVQSLFGHLMESKLQYYVPENFWKIFKMWNKELYVREQQDAYEFFTSLIDQMDEYLKKMGRDQIFKNTFQGIYSDQKICKDCPHRYEREEAFMALNLGVTSCQSLEISLDQFVRGEVLEGSNAYYCEKCKEKRITVKRTCIKSLPSVLVIHLMRFGFDWESGRSIKYDEQIRFPWMLNMEPYTVSGMARQDSSSEVGENGRSVDQGGGGSPRKKVALTENYELVGVIVHSGQAHAGHYYSFIKDRRGCGKGKWYKFNDTVIEEFDLNDETLEYECFGGEYRPKVYDQTNPYTDVRRRYWNAYMLFYQRVSDQNSPVLPKKSRVSVVRQEAEDLSLSAPSSPEISPQSSPRPHRPNNDRLSILTKLVKKGEKKGLFVEKMPARIYQMVRDENLKFMKNRDVYSSDYFSFVLSLASLNATKLKHPYYPCMAKVSLQLAIQFLFQTYLRTKKKLRVDTEEWIATIEALLSKSFDACQWLVEYFISSEGRELIKIFLLECNVREVRVAVATILEKTLDSALFYQDKLKSLHQLLEVLLALLDKDVPENCKNCAQYFFLFNTFVQKQGIRAGDLLLRHSALRHMISFLLGASRQNNQIRRWSSAQAREFGNLHNTVALLVLHSDVSSQRNVAPGIFKQRPPISIAPSSPLLPLHEEVEALLFMSEGKPYLLEVMFALRELTGSLLALIEMVVYCCFCNEHFSFTMLHFIKNQLETAPPHELKNTFQLLHEILVIEDPIQVERVKFVFETENGLLALMHHSNHVDSSRCYQCVKFLVTLAQKCPAAKEYFKENSHHWSWAVQWLQKKMSEHYWTPQSNVSNETSTGKTFQRTISAQDTLAYATALLNEKEQSGSSNGSESSPANENGDRHLQQGSESPMMIGELRSDLDDVDP</sequence>
<proteinExistence type="evidence at protein level"/>
<reference key="1">
    <citation type="journal article" date="2006" name="Nature">
        <title>The DNA sequence and biological annotation of human chromosome 1.</title>
        <authorList>
            <person name="Gregory S.G."/>
            <person name="Barlow K.F."/>
            <person name="McLay K.E."/>
            <person name="Kaul R."/>
            <person name="Swarbreck D."/>
            <person name="Dunham A."/>
            <person name="Scott C.E."/>
            <person name="Howe K.L."/>
            <person name="Woodfine K."/>
            <person name="Spencer C.C.A."/>
            <person name="Jones M.C."/>
            <person name="Gillson C."/>
            <person name="Searle S."/>
            <person name="Zhou Y."/>
            <person name="Kokocinski F."/>
            <person name="McDonald L."/>
            <person name="Evans R."/>
            <person name="Phillips K."/>
            <person name="Atkinson A."/>
            <person name="Cooper R."/>
            <person name="Jones C."/>
            <person name="Hall R.E."/>
            <person name="Andrews T.D."/>
            <person name="Lloyd C."/>
            <person name="Ainscough R."/>
            <person name="Almeida J.P."/>
            <person name="Ambrose K.D."/>
            <person name="Anderson F."/>
            <person name="Andrew R.W."/>
            <person name="Ashwell R.I.S."/>
            <person name="Aubin K."/>
            <person name="Babbage A.K."/>
            <person name="Bagguley C.L."/>
            <person name="Bailey J."/>
            <person name="Beasley H."/>
            <person name="Bethel G."/>
            <person name="Bird C.P."/>
            <person name="Bray-Allen S."/>
            <person name="Brown J.Y."/>
            <person name="Brown A.J."/>
            <person name="Buckley D."/>
            <person name="Burton J."/>
            <person name="Bye J."/>
            <person name="Carder C."/>
            <person name="Chapman J.C."/>
            <person name="Clark S.Y."/>
            <person name="Clarke G."/>
            <person name="Clee C."/>
            <person name="Cobley V."/>
            <person name="Collier R.E."/>
            <person name="Corby N."/>
            <person name="Coville G.J."/>
            <person name="Davies J."/>
            <person name="Deadman R."/>
            <person name="Dunn M."/>
            <person name="Earthrowl M."/>
            <person name="Ellington A.G."/>
            <person name="Errington H."/>
            <person name="Frankish A."/>
            <person name="Frankland J."/>
            <person name="French L."/>
            <person name="Garner P."/>
            <person name="Garnett J."/>
            <person name="Gay L."/>
            <person name="Ghori M.R.J."/>
            <person name="Gibson R."/>
            <person name="Gilby L.M."/>
            <person name="Gillett W."/>
            <person name="Glithero R.J."/>
            <person name="Grafham D.V."/>
            <person name="Griffiths C."/>
            <person name="Griffiths-Jones S."/>
            <person name="Grocock R."/>
            <person name="Hammond S."/>
            <person name="Harrison E.S.I."/>
            <person name="Hart E."/>
            <person name="Haugen E."/>
            <person name="Heath P.D."/>
            <person name="Holmes S."/>
            <person name="Holt K."/>
            <person name="Howden P.J."/>
            <person name="Hunt A.R."/>
            <person name="Hunt S.E."/>
            <person name="Hunter G."/>
            <person name="Isherwood J."/>
            <person name="James R."/>
            <person name="Johnson C."/>
            <person name="Johnson D."/>
            <person name="Joy A."/>
            <person name="Kay M."/>
            <person name="Kershaw J.K."/>
            <person name="Kibukawa M."/>
            <person name="Kimberley A.M."/>
            <person name="King A."/>
            <person name="Knights A.J."/>
            <person name="Lad H."/>
            <person name="Laird G."/>
            <person name="Lawlor S."/>
            <person name="Leongamornlert D.A."/>
            <person name="Lloyd D.M."/>
            <person name="Loveland J."/>
            <person name="Lovell J."/>
            <person name="Lush M.J."/>
            <person name="Lyne R."/>
            <person name="Martin S."/>
            <person name="Mashreghi-Mohammadi M."/>
            <person name="Matthews L."/>
            <person name="Matthews N.S.W."/>
            <person name="McLaren S."/>
            <person name="Milne S."/>
            <person name="Mistry S."/>
            <person name="Moore M.J.F."/>
            <person name="Nickerson T."/>
            <person name="O'Dell C.N."/>
            <person name="Oliver K."/>
            <person name="Palmeiri A."/>
            <person name="Palmer S.A."/>
            <person name="Parker A."/>
            <person name="Patel D."/>
            <person name="Pearce A.V."/>
            <person name="Peck A.I."/>
            <person name="Pelan S."/>
            <person name="Phelps K."/>
            <person name="Phillimore B.J."/>
            <person name="Plumb R."/>
            <person name="Rajan J."/>
            <person name="Raymond C."/>
            <person name="Rouse G."/>
            <person name="Saenphimmachak C."/>
            <person name="Sehra H.K."/>
            <person name="Sheridan E."/>
            <person name="Shownkeen R."/>
            <person name="Sims S."/>
            <person name="Skuce C.D."/>
            <person name="Smith M."/>
            <person name="Steward C."/>
            <person name="Subramanian S."/>
            <person name="Sycamore N."/>
            <person name="Tracey A."/>
            <person name="Tromans A."/>
            <person name="Van Helmond Z."/>
            <person name="Wall M."/>
            <person name="Wallis J.M."/>
            <person name="White S."/>
            <person name="Whitehead S.L."/>
            <person name="Wilkinson J.E."/>
            <person name="Willey D.L."/>
            <person name="Williams H."/>
            <person name="Wilming L."/>
            <person name="Wray P.W."/>
            <person name="Wu Z."/>
            <person name="Coulson A."/>
            <person name="Vaudin M."/>
            <person name="Sulston J.E."/>
            <person name="Durbin R.M."/>
            <person name="Hubbard T."/>
            <person name="Wooster R."/>
            <person name="Dunham I."/>
            <person name="Carter N.P."/>
            <person name="McVean G."/>
            <person name="Ross M.T."/>
            <person name="Harrow J."/>
            <person name="Olson M.V."/>
            <person name="Beck S."/>
            <person name="Rogers J."/>
            <person name="Bentley D.R."/>
        </authorList>
    </citation>
    <scope>NUCLEOTIDE SEQUENCE [LARGE SCALE GENOMIC DNA]</scope>
</reference>
<reference key="2">
    <citation type="journal article" date="2004" name="Nat. Genet.">
        <title>Complete sequencing and characterization of 21,243 full-length human cDNAs.</title>
        <authorList>
            <person name="Ota T."/>
            <person name="Suzuki Y."/>
            <person name="Nishikawa T."/>
            <person name="Otsuki T."/>
            <person name="Sugiyama T."/>
            <person name="Irie R."/>
            <person name="Wakamatsu A."/>
            <person name="Hayashi K."/>
            <person name="Sato H."/>
            <person name="Nagai K."/>
            <person name="Kimura K."/>
            <person name="Makita H."/>
            <person name="Sekine M."/>
            <person name="Obayashi M."/>
            <person name="Nishi T."/>
            <person name="Shibahara T."/>
            <person name="Tanaka T."/>
            <person name="Ishii S."/>
            <person name="Yamamoto J."/>
            <person name="Saito K."/>
            <person name="Kawai Y."/>
            <person name="Isono Y."/>
            <person name="Nakamura Y."/>
            <person name="Nagahari K."/>
            <person name="Murakami K."/>
            <person name="Yasuda T."/>
            <person name="Iwayanagi T."/>
            <person name="Wagatsuma M."/>
            <person name="Shiratori A."/>
            <person name="Sudo H."/>
            <person name="Hosoiri T."/>
            <person name="Kaku Y."/>
            <person name="Kodaira H."/>
            <person name="Kondo H."/>
            <person name="Sugawara M."/>
            <person name="Takahashi M."/>
            <person name="Kanda K."/>
            <person name="Yokoi T."/>
            <person name="Furuya T."/>
            <person name="Kikkawa E."/>
            <person name="Omura Y."/>
            <person name="Abe K."/>
            <person name="Kamihara K."/>
            <person name="Katsuta N."/>
            <person name="Sato K."/>
            <person name="Tanikawa M."/>
            <person name="Yamazaki M."/>
            <person name="Ninomiya K."/>
            <person name="Ishibashi T."/>
            <person name="Yamashita H."/>
            <person name="Murakawa K."/>
            <person name="Fujimori K."/>
            <person name="Tanai H."/>
            <person name="Kimata M."/>
            <person name="Watanabe M."/>
            <person name="Hiraoka S."/>
            <person name="Chiba Y."/>
            <person name="Ishida S."/>
            <person name="Ono Y."/>
            <person name="Takiguchi S."/>
            <person name="Watanabe S."/>
            <person name="Yosida M."/>
            <person name="Hotuta T."/>
            <person name="Kusano J."/>
            <person name="Kanehori K."/>
            <person name="Takahashi-Fujii A."/>
            <person name="Hara H."/>
            <person name="Tanase T.-O."/>
            <person name="Nomura Y."/>
            <person name="Togiya S."/>
            <person name="Komai F."/>
            <person name="Hara R."/>
            <person name="Takeuchi K."/>
            <person name="Arita M."/>
            <person name="Imose N."/>
            <person name="Musashino K."/>
            <person name="Yuuki H."/>
            <person name="Oshima A."/>
            <person name="Sasaki N."/>
            <person name="Aotsuka S."/>
            <person name="Yoshikawa Y."/>
            <person name="Matsunawa H."/>
            <person name="Ichihara T."/>
            <person name="Shiohata N."/>
            <person name="Sano S."/>
            <person name="Moriya S."/>
            <person name="Momiyama H."/>
            <person name="Satoh N."/>
            <person name="Takami S."/>
            <person name="Terashima Y."/>
            <person name="Suzuki O."/>
            <person name="Nakagawa S."/>
            <person name="Senoh A."/>
            <person name="Mizoguchi H."/>
            <person name="Goto Y."/>
            <person name="Shimizu F."/>
            <person name="Wakebe H."/>
            <person name="Hishigaki H."/>
            <person name="Watanabe T."/>
            <person name="Sugiyama A."/>
            <person name="Takemoto M."/>
            <person name="Kawakami B."/>
            <person name="Yamazaki M."/>
            <person name="Watanabe K."/>
            <person name="Kumagai A."/>
            <person name="Itakura S."/>
            <person name="Fukuzumi Y."/>
            <person name="Fujimori Y."/>
            <person name="Komiyama M."/>
            <person name="Tashiro H."/>
            <person name="Tanigami A."/>
            <person name="Fujiwara T."/>
            <person name="Ono T."/>
            <person name="Yamada K."/>
            <person name="Fujii Y."/>
            <person name="Ozaki K."/>
            <person name="Hirao M."/>
            <person name="Ohmori Y."/>
            <person name="Kawabata A."/>
            <person name="Hikiji T."/>
            <person name="Kobatake N."/>
            <person name="Inagaki H."/>
            <person name="Ikema Y."/>
            <person name="Okamoto S."/>
            <person name="Okitani R."/>
            <person name="Kawakami T."/>
            <person name="Noguchi S."/>
            <person name="Itoh T."/>
            <person name="Shigeta K."/>
            <person name="Senba T."/>
            <person name="Matsumura K."/>
            <person name="Nakajima Y."/>
            <person name="Mizuno T."/>
            <person name="Morinaga M."/>
            <person name="Sasaki M."/>
            <person name="Togashi T."/>
            <person name="Oyama M."/>
            <person name="Hata H."/>
            <person name="Watanabe M."/>
            <person name="Komatsu T."/>
            <person name="Mizushima-Sugano J."/>
            <person name="Satoh T."/>
            <person name="Shirai Y."/>
            <person name="Takahashi Y."/>
            <person name="Nakagawa K."/>
            <person name="Okumura K."/>
            <person name="Nagase T."/>
            <person name="Nomura N."/>
            <person name="Kikuchi H."/>
            <person name="Masuho Y."/>
            <person name="Yamashita R."/>
            <person name="Nakai K."/>
            <person name="Yada T."/>
            <person name="Nakamura Y."/>
            <person name="Ohara O."/>
            <person name="Isogai T."/>
            <person name="Sugano S."/>
        </authorList>
    </citation>
    <scope>NUCLEOTIDE SEQUENCE [LARGE SCALE MRNA] OF 751-2082 AND 2256-2620</scope>
    <scope>VARIANT ALA-2468</scope>
</reference>
<reference key="3">
    <citation type="journal article" date="1999" name="DNA Res.">
        <title>Prediction of the coding sequences of unidentified human genes. XIV. The complete sequences of 100 new cDNA clones from brain which code for large proteins in vitro.</title>
        <authorList>
            <person name="Kikuno R."/>
            <person name="Nagase T."/>
            <person name="Ishikawa K."/>
            <person name="Hirosawa M."/>
            <person name="Miyajima N."/>
            <person name="Tanaka A."/>
            <person name="Kotani H."/>
            <person name="Nomura N."/>
            <person name="Ohara O."/>
        </authorList>
    </citation>
    <scope>NUCLEOTIDE SEQUENCE [LARGE SCALE MRNA] OF 2233-2620</scope>
    <scope>VARIANT ALA-2468</scope>
    <source>
        <tissue>Brain</tissue>
    </source>
</reference>
<reference key="4">
    <citation type="journal article" date="2004" name="Genome Res.">
        <title>The status, quality, and expansion of the NIH full-length cDNA project: the Mammalian Gene Collection (MGC).</title>
        <authorList>
            <consortium name="The MGC Project Team"/>
        </authorList>
    </citation>
    <scope>NUCLEOTIDE SEQUENCE [LARGE SCALE MRNA] OF 1483-2620</scope>
    <source>
        <tissue>Placenta</tissue>
    </source>
</reference>
<reference key="5">
    <citation type="journal article" date="2004" name="Anal. Chem.">
        <title>Robust phosphoproteomic profiling of tyrosine phosphorylation sites from human T cells using immobilized metal affinity chromatography and tandem mass spectrometry.</title>
        <authorList>
            <person name="Brill L.M."/>
            <person name="Salomon A.R."/>
            <person name="Ficarro S.B."/>
            <person name="Mukherji M."/>
            <person name="Stettler-Gill M."/>
            <person name="Peters E.C."/>
        </authorList>
    </citation>
    <scope>PHOSPHORYLATION [LARGE SCALE ANALYSIS] AT SER-2047</scope>
    <scope>IDENTIFICATION BY MASS SPECTROMETRY [LARGE SCALE ANALYSIS]</scope>
    <source>
        <tissue>Leukemic T-cell</tissue>
    </source>
</reference>
<reference key="6">
    <citation type="journal article" date="2008" name="J. Proteome Res.">
        <title>Combining protein-based IMAC, peptide-based IMAC, and MudPIT for efficient phosphoproteomic analysis.</title>
        <authorList>
            <person name="Cantin G.T."/>
            <person name="Yi W."/>
            <person name="Lu B."/>
            <person name="Park S.K."/>
            <person name="Xu T."/>
            <person name="Lee J.-D."/>
            <person name="Yates J.R. III"/>
        </authorList>
    </citation>
    <scope>PHOSPHORYLATION [LARGE SCALE ANALYSIS] AT SER-63</scope>
    <scope>IDENTIFICATION BY MASS SPECTROMETRY [LARGE SCALE ANALYSIS]</scope>
    <source>
        <tissue>Cervix carcinoma</tissue>
    </source>
</reference>
<reference key="7">
    <citation type="journal article" date="2008" name="J. Proteome Res.">
        <title>Phosphoproteome of resting human platelets.</title>
        <authorList>
            <person name="Zahedi R.P."/>
            <person name="Lewandrowski U."/>
            <person name="Wiesner J."/>
            <person name="Wortelkamp S."/>
            <person name="Moebius J."/>
            <person name="Schuetz C."/>
            <person name="Walter U."/>
            <person name="Gambaryan S."/>
            <person name="Sickmann A."/>
        </authorList>
    </citation>
    <scope>PHOSPHORYLATION [LARGE SCALE ANALYSIS] AT SER-2047</scope>
    <scope>IDENTIFICATION BY MASS SPECTROMETRY [LARGE SCALE ANALYSIS]</scope>
    <source>
        <tissue>Platelet</tissue>
    </source>
</reference>
<reference key="8">
    <citation type="journal article" date="2008" name="Mol. Cell">
        <title>Kinase-selective enrichment enables quantitative phosphoproteomics of the kinome across the cell cycle.</title>
        <authorList>
            <person name="Daub H."/>
            <person name="Olsen J.V."/>
            <person name="Bairlein M."/>
            <person name="Gnad F."/>
            <person name="Oppermann F.S."/>
            <person name="Korner R."/>
            <person name="Greff Z."/>
            <person name="Keri G."/>
            <person name="Stemmann O."/>
            <person name="Mann M."/>
        </authorList>
    </citation>
    <scope>PHOSPHORYLATION [LARGE SCALE ANALYSIS] AT SER-2047</scope>
    <scope>IDENTIFICATION BY MASS SPECTROMETRY [LARGE SCALE ANALYSIS]</scope>
    <source>
        <tissue>Cervix carcinoma</tissue>
    </source>
</reference>
<reference key="9">
    <citation type="journal article" date="2008" name="Proc. Natl. Acad. Sci. U.S.A.">
        <title>A quantitative atlas of mitotic phosphorylation.</title>
        <authorList>
            <person name="Dephoure N."/>
            <person name="Zhou C."/>
            <person name="Villen J."/>
            <person name="Beausoleil S.A."/>
            <person name="Bakalarski C.E."/>
            <person name="Elledge S.J."/>
            <person name="Gygi S.P."/>
        </authorList>
    </citation>
    <scope>PHOSPHORYLATION [LARGE SCALE ANALYSIS] AT SER-63; SER-1141; SER-2047; THR-2565 AND SER-2604</scope>
    <scope>IDENTIFICATION BY MASS SPECTROMETRY [LARGE SCALE ANALYSIS]</scope>
    <source>
        <tissue>Cervix carcinoma</tissue>
    </source>
</reference>
<reference key="10">
    <citation type="journal article" date="2009" name="Anal. Chem.">
        <title>Lys-N and trypsin cover complementary parts of the phosphoproteome in a refined SCX-based approach.</title>
        <authorList>
            <person name="Gauci S."/>
            <person name="Helbig A.O."/>
            <person name="Slijper M."/>
            <person name="Krijgsveld J."/>
            <person name="Heck A.J."/>
            <person name="Mohammed S."/>
        </authorList>
    </citation>
    <scope>IDENTIFICATION BY MASS SPECTROMETRY [LARGE SCALE ANALYSIS]</scope>
</reference>
<reference key="11">
    <citation type="journal article" date="2009" name="Mol. Cell. Proteomics">
        <title>Large-scale proteomics analysis of the human kinome.</title>
        <authorList>
            <person name="Oppermann F.S."/>
            <person name="Gnad F."/>
            <person name="Olsen J.V."/>
            <person name="Hornberger R."/>
            <person name="Greff Z."/>
            <person name="Keri G."/>
            <person name="Mann M."/>
            <person name="Daub H."/>
        </authorList>
    </citation>
    <scope>PHOSPHORYLATION [LARGE SCALE ANALYSIS] AT SER-2047</scope>
    <scope>IDENTIFICATION BY MASS SPECTROMETRY [LARGE SCALE ANALYSIS]</scope>
</reference>
<reference key="12">
    <citation type="journal article" date="2009" name="Sci. Signal.">
        <title>Quantitative phosphoproteomic analysis of T cell receptor signaling reveals system-wide modulation of protein-protein interactions.</title>
        <authorList>
            <person name="Mayya V."/>
            <person name="Lundgren D.H."/>
            <person name="Hwang S.-I."/>
            <person name="Rezaul K."/>
            <person name="Wu L."/>
            <person name="Eng J.K."/>
            <person name="Rodionov V."/>
            <person name="Han D.K."/>
        </authorList>
    </citation>
    <scope>PHOSPHORYLATION [LARGE SCALE ANALYSIS] AT SER-2561</scope>
    <scope>IDENTIFICATION BY MASS SPECTROMETRY [LARGE SCALE ANALYSIS]</scope>
    <source>
        <tissue>Leukemic T-cell</tissue>
    </source>
</reference>
<reference key="13">
    <citation type="journal article" date="2010" name="Sci. Signal.">
        <title>Quantitative phosphoproteomics reveals widespread full phosphorylation site occupancy during mitosis.</title>
        <authorList>
            <person name="Olsen J.V."/>
            <person name="Vermeulen M."/>
            <person name="Santamaria A."/>
            <person name="Kumar C."/>
            <person name="Miller M.L."/>
            <person name="Jensen L.J."/>
            <person name="Gnad F."/>
            <person name="Cox J."/>
            <person name="Jensen T.S."/>
            <person name="Nigg E.A."/>
            <person name="Brunak S."/>
            <person name="Mann M."/>
        </authorList>
    </citation>
    <scope>PHOSPHORYLATION [LARGE SCALE ANALYSIS] AT SER-2047 AND THR-2565</scope>
    <scope>IDENTIFICATION BY MASS SPECTROMETRY [LARGE SCALE ANALYSIS]</scope>
    <source>
        <tissue>Cervix carcinoma</tissue>
    </source>
</reference>
<reference key="14">
    <citation type="journal article" date="2011" name="BMC Syst. Biol.">
        <title>Initial characterization of the human central proteome.</title>
        <authorList>
            <person name="Burkard T.R."/>
            <person name="Planyavsky M."/>
            <person name="Kaupe I."/>
            <person name="Breitwieser F.P."/>
            <person name="Buerckstuemmer T."/>
            <person name="Bennett K.L."/>
            <person name="Superti-Furga G."/>
            <person name="Colinge J."/>
        </authorList>
    </citation>
    <scope>IDENTIFICATION BY MASS SPECTROMETRY [LARGE SCALE ANALYSIS]</scope>
</reference>
<reference key="15">
    <citation type="journal article" date="2011" name="Sci. Signal.">
        <title>System-wide temporal characterization of the proteome and phosphoproteome of human embryonic stem cell differentiation.</title>
        <authorList>
            <person name="Rigbolt K.T."/>
            <person name="Prokhorova T.A."/>
            <person name="Akimov V."/>
            <person name="Henningsen J."/>
            <person name="Johansen P.T."/>
            <person name="Kratchmarova I."/>
            <person name="Kassem M."/>
            <person name="Mann M."/>
            <person name="Olsen J.V."/>
            <person name="Blagoev B."/>
        </authorList>
    </citation>
    <scope>PHOSPHORYLATION [LARGE SCALE ANALYSIS] AT SER-2047 AND THR-2565</scope>
    <scope>IDENTIFICATION BY MASS SPECTROMETRY [LARGE SCALE ANALYSIS]</scope>
</reference>
<reference key="16">
    <citation type="journal article" date="2012" name="Cell Cycle">
        <title>The deubiquitinating protein USP24 interacts with DDB2 and regulates DDB2 stability.</title>
        <authorList>
            <person name="Zhang L."/>
            <person name="Lubin A."/>
            <person name="Chen H."/>
            <person name="Sun Z."/>
            <person name="Gong F."/>
        </authorList>
    </citation>
    <scope>FUNCTION</scope>
</reference>
<reference key="17">
    <citation type="journal article" date="2013" name="J. Proteome Res.">
        <title>Toward a comprehensive characterization of a human cancer cell phosphoproteome.</title>
        <authorList>
            <person name="Zhou H."/>
            <person name="Di Palma S."/>
            <person name="Preisinger C."/>
            <person name="Peng M."/>
            <person name="Polat A.N."/>
            <person name="Heck A.J."/>
            <person name="Mohammed S."/>
        </authorList>
    </citation>
    <scope>PHOSPHORYLATION [LARGE SCALE ANALYSIS] AT SER-1141; SER-1285; SER-2047; SER-2561 AND SER-2604</scope>
    <scope>IDENTIFICATION BY MASS SPECTROMETRY [LARGE SCALE ANALYSIS]</scope>
    <source>
        <tissue>Cervix carcinoma</tissue>
        <tissue>Erythroleukemia</tissue>
    </source>
</reference>
<reference key="18">
    <citation type="journal article" date="2014" name="J. Proteomics">
        <title>An enzyme assisted RP-RPLC approach for in-depth analysis of human liver phosphoproteome.</title>
        <authorList>
            <person name="Bian Y."/>
            <person name="Song C."/>
            <person name="Cheng K."/>
            <person name="Dong M."/>
            <person name="Wang F."/>
            <person name="Huang J."/>
            <person name="Sun D."/>
            <person name="Wang L."/>
            <person name="Ye M."/>
            <person name="Zou H."/>
        </authorList>
    </citation>
    <scope>PHOSPHORYLATION [LARGE SCALE ANALYSIS] AT SER-88 AND SER-2047</scope>
    <scope>IDENTIFICATION BY MASS SPECTROMETRY [LARGE SCALE ANALYSIS]</scope>
    <source>
        <tissue>Liver</tissue>
    </source>
</reference>
<reference key="19">
    <citation type="journal article" date="2018" name="J. Virol.">
        <title>Human Cytomegalovirus Protein pUL38 Prevents Premature Cell Death by Binding to Ubiquitin-specific Protease 24 and Regulating Iron Metabolism.</title>
        <authorList>
            <person name="Sun Y."/>
            <person name="Bao Q."/>
            <person name="Xuan B."/>
            <person name="Xu W."/>
            <person name="Pan D."/>
            <person name="Li Q."/>
            <person name="Qian Z."/>
        </authorList>
    </citation>
    <scope>FUNCTION</scope>
    <scope>INTERACTION WITH HUMAN CYTOMEGALOVIRUS PROTEIN UL38 (MICROBIAL INFECTION)</scope>
</reference>